<keyword id="KW-1003">Cell membrane</keyword>
<keyword id="KW-0406">Ion transport</keyword>
<keyword id="KW-0472">Membrane</keyword>
<keyword id="KW-0630">Potassium</keyword>
<keyword id="KW-0633">Potassium transport</keyword>
<keyword id="KW-1185">Reference proteome</keyword>
<keyword id="KW-0732">Signal</keyword>
<keyword id="KW-0915">Sodium</keyword>
<keyword id="KW-0739">Sodium transport</keyword>
<keyword id="KW-0740">Sodium/potassium transport</keyword>
<keyword id="KW-0812">Transmembrane</keyword>
<keyword id="KW-1133">Transmembrane helix</keyword>
<keyword id="KW-0813">Transport</keyword>
<reference key="1">
    <citation type="submission" date="2005-09" db="EMBL/GenBank/DDBJ databases">
        <authorList>
            <consortium name="NIH - Mammalian Gene Collection (MGC) project"/>
        </authorList>
    </citation>
    <scope>NUCLEOTIDE SEQUENCE [LARGE SCALE MRNA]</scope>
    <source>
        <strain>Hereford</strain>
        <tissue>Ascending colon</tissue>
    </source>
</reference>
<organism>
    <name type="scientific">Bos taurus</name>
    <name type="common">Bovine</name>
    <dbReference type="NCBI Taxonomy" id="9913"/>
    <lineage>
        <taxon>Eukaryota</taxon>
        <taxon>Metazoa</taxon>
        <taxon>Chordata</taxon>
        <taxon>Craniata</taxon>
        <taxon>Vertebrata</taxon>
        <taxon>Euteleostomi</taxon>
        <taxon>Mammalia</taxon>
        <taxon>Eutheria</taxon>
        <taxon>Laurasiatheria</taxon>
        <taxon>Artiodactyla</taxon>
        <taxon>Ruminantia</taxon>
        <taxon>Pecora</taxon>
        <taxon>Bovidae</taxon>
        <taxon>Bovinae</taxon>
        <taxon>Bos</taxon>
    </lineage>
</organism>
<protein>
    <recommendedName>
        <fullName>FXYD domain-containing ion transport regulator 6</fullName>
    </recommendedName>
    <alternativeName>
        <fullName>Phosphohippolin</fullName>
    </alternativeName>
</protein>
<evidence type="ECO:0000250" key="1">
    <source>
        <dbReference type="UniProtKB" id="Q91XV6"/>
    </source>
</evidence>
<evidence type="ECO:0000250" key="2">
    <source>
        <dbReference type="UniProtKB" id="Q9H0Q3"/>
    </source>
</evidence>
<evidence type="ECO:0000255" key="3"/>
<evidence type="ECO:0000256" key="4">
    <source>
        <dbReference type="SAM" id="MobiDB-lite"/>
    </source>
</evidence>
<evidence type="ECO:0000305" key="5"/>
<accession>Q3MHZ5</accession>
<comment type="function">
    <text evidence="1 2">Associates with and regulates the activity of the sodium/potassium-transporting ATPase (NKA) which catalyzes the hydrolysis of ATP coupled with the exchange of Na(+) and K(+) ions across the plasma membrane. Reduces the apparent affinity for intracellular Na(+) with no change in the apparent affinity for extracellular K(+) (By similarity). In addition to modulating NKA kinetics, may also function as a regulator of NKA localization to the plasma membrane (By similarity).</text>
</comment>
<comment type="subunit">
    <text evidence="2">Regulatory subunit of the sodium/potassium-transporting ATPase which is composed of a catalytic alpha subunit, a non-catalytic beta subunit and an additional regulatory subunit. The regulatory subunit, a member of the FXYD protein family, modulates the enzymatic activity in a tissue- and isoform-specific way by changing affinities of the Na+/K+-ATPase toward Na(+), K(+) or ATP.</text>
</comment>
<comment type="subcellular location">
    <subcellularLocation>
        <location evidence="1">Cell membrane</location>
        <topology evidence="5">Single-pass type I membrane protein</topology>
    </subcellularLocation>
</comment>
<comment type="similarity">
    <text evidence="5">Belongs to the FXYD family.</text>
</comment>
<feature type="signal peptide" evidence="1">
    <location>
        <begin position="1"/>
        <end position="18"/>
    </location>
</feature>
<feature type="chain" id="PRO_0000230994" description="FXYD domain-containing ion transport regulator 6">
    <location>
        <begin position="19"/>
        <end position="95"/>
    </location>
</feature>
<feature type="topological domain" description="Extracellular" evidence="3">
    <location>
        <begin position="19"/>
        <end position="35"/>
    </location>
</feature>
<feature type="transmembrane region" description="Helical" evidence="2">
    <location>
        <begin position="36"/>
        <end position="58"/>
    </location>
</feature>
<feature type="topological domain" description="Cytoplasmic" evidence="3">
    <location>
        <begin position="59"/>
        <end position="95"/>
    </location>
</feature>
<feature type="region of interest" description="Disordered" evidence="4">
    <location>
        <begin position="69"/>
        <end position="95"/>
    </location>
</feature>
<name>FXYD6_BOVIN</name>
<dbReference type="EMBL" id="BC104508">
    <property type="protein sequence ID" value="AAI04509.1"/>
    <property type="molecule type" value="mRNA"/>
</dbReference>
<dbReference type="RefSeq" id="NP_001029571.1">
    <property type="nucleotide sequence ID" value="NM_001034399.1"/>
</dbReference>
<dbReference type="RefSeq" id="XP_005215879.1">
    <property type="nucleotide sequence ID" value="XM_005215822.1"/>
</dbReference>
<dbReference type="RefSeq" id="XP_015330097.1">
    <property type="nucleotide sequence ID" value="XM_015474611.1"/>
</dbReference>
<dbReference type="RefSeq" id="XP_015330098.1">
    <property type="nucleotide sequence ID" value="XM_015474612.1"/>
</dbReference>
<dbReference type="SMR" id="Q3MHZ5"/>
<dbReference type="FunCoup" id="Q3MHZ5">
    <property type="interactions" value="722"/>
</dbReference>
<dbReference type="STRING" id="9913.ENSBTAP00000067637"/>
<dbReference type="PaxDb" id="9913-ENSBTAP00000039832"/>
<dbReference type="Ensembl" id="ENSBTAT00000040049.4">
    <property type="protein sequence ID" value="ENSBTAP00000039832.3"/>
    <property type="gene ID" value="ENSBTAG00000014354.6"/>
</dbReference>
<dbReference type="GeneID" id="511064"/>
<dbReference type="KEGG" id="bta:511064"/>
<dbReference type="CTD" id="53826"/>
<dbReference type="VEuPathDB" id="HostDB:ENSBTAG00000014354"/>
<dbReference type="VGNC" id="VGNC:54871">
    <property type="gene designation" value="FXYD6"/>
</dbReference>
<dbReference type="eggNOG" id="ENOG502S570">
    <property type="taxonomic scope" value="Eukaryota"/>
</dbReference>
<dbReference type="GeneTree" id="ENSGT00940000153062"/>
<dbReference type="HOGENOM" id="CLU_171208_3_0_1"/>
<dbReference type="InParanoid" id="Q3MHZ5"/>
<dbReference type="OMA" id="RCHCGAN"/>
<dbReference type="OrthoDB" id="8895254at2759"/>
<dbReference type="TreeFam" id="TF333443"/>
<dbReference type="Reactome" id="R-BTA-5578775">
    <property type="pathway name" value="Ion homeostasis"/>
</dbReference>
<dbReference type="Reactome" id="R-BTA-936837">
    <property type="pathway name" value="Ion transport by P-type ATPases"/>
</dbReference>
<dbReference type="Proteomes" id="UP000009136">
    <property type="component" value="Chromosome 15"/>
</dbReference>
<dbReference type="Bgee" id="ENSBTAG00000014354">
    <property type="expression patterns" value="Expressed in parenchyma of mammary gland and 106 other cell types or tissues"/>
</dbReference>
<dbReference type="GO" id="GO:0098978">
    <property type="term" value="C:glutamatergic synapse"/>
    <property type="evidence" value="ECO:0007669"/>
    <property type="project" value="Ensembl"/>
</dbReference>
<dbReference type="GO" id="GO:0045211">
    <property type="term" value="C:postsynaptic membrane"/>
    <property type="evidence" value="ECO:0007669"/>
    <property type="project" value="Ensembl"/>
</dbReference>
<dbReference type="GO" id="GO:0042734">
    <property type="term" value="C:presynaptic membrane"/>
    <property type="evidence" value="ECO:0007669"/>
    <property type="project" value="Ensembl"/>
</dbReference>
<dbReference type="GO" id="GO:0017080">
    <property type="term" value="F:sodium channel regulator activity"/>
    <property type="evidence" value="ECO:0000318"/>
    <property type="project" value="GO_Central"/>
</dbReference>
<dbReference type="GO" id="GO:1903278">
    <property type="term" value="P:positive regulation of sodium ion export across plasma membrane"/>
    <property type="evidence" value="ECO:0000318"/>
    <property type="project" value="GO_Central"/>
</dbReference>
<dbReference type="GO" id="GO:0006813">
    <property type="term" value="P:potassium ion transport"/>
    <property type="evidence" value="ECO:0007669"/>
    <property type="project" value="UniProtKB-KW"/>
</dbReference>
<dbReference type="GO" id="GO:0006814">
    <property type="term" value="P:sodium ion transport"/>
    <property type="evidence" value="ECO:0007669"/>
    <property type="project" value="UniProtKB-KW"/>
</dbReference>
<dbReference type="FunFam" id="1.20.5.780:FF:000001">
    <property type="entry name" value="Fxyd domain-containing ion transport regulator"/>
    <property type="match status" value="1"/>
</dbReference>
<dbReference type="Gene3D" id="1.20.5.780">
    <property type="entry name" value="Single helix bin"/>
    <property type="match status" value="1"/>
</dbReference>
<dbReference type="InterPro" id="IPR047297">
    <property type="entry name" value="FXYD_motif"/>
</dbReference>
<dbReference type="InterPro" id="IPR000272">
    <property type="entry name" value="Ion-transport_regulator_FXYD"/>
</dbReference>
<dbReference type="PANTHER" id="PTHR14132:SF15">
    <property type="entry name" value="FXYD DOMAIN-CONTAINING ION TRANSPORT REGULATOR 6-RELATED"/>
    <property type="match status" value="1"/>
</dbReference>
<dbReference type="PANTHER" id="PTHR14132">
    <property type="entry name" value="SODIUM/POTASSIUM-TRANSPORTING ATPASE SUBUNIT GAMMA"/>
    <property type="match status" value="1"/>
</dbReference>
<dbReference type="Pfam" id="PF02038">
    <property type="entry name" value="ATP1G1_PLM_MAT8"/>
    <property type="match status" value="1"/>
</dbReference>
<dbReference type="PROSITE" id="PS01310">
    <property type="entry name" value="FXYD"/>
    <property type="match status" value="1"/>
</dbReference>
<proteinExistence type="inferred from homology"/>
<gene>
    <name type="primary">FXYD6</name>
</gene>
<sequence length="95" mass="10465">MEVVLLFLCGLLAPAVLASATEQEKEKDPFHYDYQTLRIGGLVFAVVLFSVGILLILSRRCKCSFNQKPRAPGDEEAQVENLVTANATEPQKAEN</sequence>